<dbReference type="EMBL" id="AAFI02000079">
    <property type="protein sequence ID" value="EAL64576.1"/>
    <property type="molecule type" value="Genomic_DNA"/>
</dbReference>
<dbReference type="RefSeq" id="XP_638078.1">
    <property type="nucleotide sequence ID" value="XM_632986.1"/>
</dbReference>
<dbReference type="SMR" id="Q54N65"/>
<dbReference type="PaxDb" id="44689-DDB0186520"/>
<dbReference type="EnsemblProtists" id="EAL64576">
    <property type="protein sequence ID" value="EAL64576"/>
    <property type="gene ID" value="DDB_G0285477"/>
</dbReference>
<dbReference type="GeneID" id="8625124"/>
<dbReference type="KEGG" id="ddi:DDB_G0285477"/>
<dbReference type="dictyBase" id="DDB_G0285477"/>
<dbReference type="VEuPathDB" id="AmoebaDB:DDB_G0285477"/>
<dbReference type="HOGENOM" id="CLU_186417_0_0_1"/>
<dbReference type="InParanoid" id="Q54N65"/>
<dbReference type="PRO" id="PR:Q54N65"/>
<dbReference type="Proteomes" id="UP000002195">
    <property type="component" value="Chromosome 4"/>
</dbReference>
<dbReference type="Gene3D" id="1.20.5.1700">
    <property type="match status" value="1"/>
</dbReference>
<protein>
    <recommendedName>
        <fullName>UPF0521 protein A</fullName>
    </recommendedName>
</protein>
<reference key="1">
    <citation type="journal article" date="2005" name="Nature">
        <title>The genome of the social amoeba Dictyostelium discoideum.</title>
        <authorList>
            <person name="Eichinger L."/>
            <person name="Pachebat J.A."/>
            <person name="Gloeckner G."/>
            <person name="Rajandream M.A."/>
            <person name="Sucgang R."/>
            <person name="Berriman M."/>
            <person name="Song J."/>
            <person name="Olsen R."/>
            <person name="Szafranski K."/>
            <person name="Xu Q."/>
            <person name="Tunggal B."/>
            <person name="Kummerfeld S."/>
            <person name="Madera M."/>
            <person name="Konfortov B.A."/>
            <person name="Rivero F."/>
            <person name="Bankier A.T."/>
            <person name="Lehmann R."/>
            <person name="Hamlin N."/>
            <person name="Davies R."/>
            <person name="Gaudet P."/>
            <person name="Fey P."/>
            <person name="Pilcher K."/>
            <person name="Chen G."/>
            <person name="Saunders D."/>
            <person name="Sodergren E.J."/>
            <person name="Davis P."/>
            <person name="Kerhornou A."/>
            <person name="Nie X."/>
            <person name="Hall N."/>
            <person name="Anjard C."/>
            <person name="Hemphill L."/>
            <person name="Bason N."/>
            <person name="Farbrother P."/>
            <person name="Desany B."/>
            <person name="Just E."/>
            <person name="Morio T."/>
            <person name="Rost R."/>
            <person name="Churcher C.M."/>
            <person name="Cooper J."/>
            <person name="Haydock S."/>
            <person name="van Driessche N."/>
            <person name="Cronin A."/>
            <person name="Goodhead I."/>
            <person name="Muzny D.M."/>
            <person name="Mourier T."/>
            <person name="Pain A."/>
            <person name="Lu M."/>
            <person name="Harper D."/>
            <person name="Lindsay R."/>
            <person name="Hauser H."/>
            <person name="James K.D."/>
            <person name="Quiles M."/>
            <person name="Madan Babu M."/>
            <person name="Saito T."/>
            <person name="Buchrieser C."/>
            <person name="Wardroper A."/>
            <person name="Felder M."/>
            <person name="Thangavelu M."/>
            <person name="Johnson D."/>
            <person name="Knights A."/>
            <person name="Loulseged H."/>
            <person name="Mungall K.L."/>
            <person name="Oliver K."/>
            <person name="Price C."/>
            <person name="Quail M.A."/>
            <person name="Urushihara H."/>
            <person name="Hernandez J."/>
            <person name="Rabbinowitsch E."/>
            <person name="Steffen D."/>
            <person name="Sanders M."/>
            <person name="Ma J."/>
            <person name="Kohara Y."/>
            <person name="Sharp S."/>
            <person name="Simmonds M.N."/>
            <person name="Spiegler S."/>
            <person name="Tivey A."/>
            <person name="Sugano S."/>
            <person name="White B."/>
            <person name="Walker D."/>
            <person name="Woodward J.R."/>
            <person name="Winckler T."/>
            <person name="Tanaka Y."/>
            <person name="Shaulsky G."/>
            <person name="Schleicher M."/>
            <person name="Weinstock G.M."/>
            <person name="Rosenthal A."/>
            <person name="Cox E.C."/>
            <person name="Chisholm R.L."/>
            <person name="Gibbs R.A."/>
            <person name="Loomis W.F."/>
            <person name="Platzer M."/>
            <person name="Kay R.R."/>
            <person name="Williams J.G."/>
            <person name="Dear P.H."/>
            <person name="Noegel A.A."/>
            <person name="Barrell B.G."/>
            <person name="Kuspa A."/>
        </authorList>
    </citation>
    <scope>NUCLEOTIDE SEQUENCE [LARGE SCALE GENOMIC DNA]</scope>
    <source>
        <strain>AX4</strain>
    </source>
</reference>
<feature type="chain" id="PRO_0000319969" description="UPF0521 protein A">
    <location>
        <begin position="1"/>
        <end position="93"/>
    </location>
</feature>
<feature type="coiled-coil region" evidence="1">
    <location>
        <begin position="2"/>
        <end position="58"/>
    </location>
</feature>
<organism>
    <name type="scientific">Dictyostelium discoideum</name>
    <name type="common">Social amoeba</name>
    <dbReference type="NCBI Taxonomy" id="44689"/>
    <lineage>
        <taxon>Eukaryota</taxon>
        <taxon>Amoebozoa</taxon>
        <taxon>Evosea</taxon>
        <taxon>Eumycetozoa</taxon>
        <taxon>Dictyostelia</taxon>
        <taxon>Dictyosteliales</taxon>
        <taxon>Dictyosteliaceae</taxon>
        <taxon>Dictyostelium</taxon>
    </lineage>
</organism>
<evidence type="ECO:0000255" key="1"/>
<evidence type="ECO:0000305" key="2"/>
<sequence>MSLKEVITSLKNDFHSINKEIDSMKENNEKQEDKIFQEIKKLKLEMELLRKDNLSFKTTIQSLSDSINSLSSVESTYDSDLYYDDDEYSTIYL</sequence>
<accession>Q54N65</accession>
<comment type="similarity">
    <text evidence="2">Belongs to the UPF0521 family.</text>
</comment>
<keyword id="KW-0175">Coiled coil</keyword>
<keyword id="KW-1185">Reference proteome</keyword>
<proteinExistence type="inferred from homology"/>
<gene>
    <name type="ORF">DDB_G0285477</name>
</gene>
<name>U521A_DICDI</name>